<accession>Q13EM9</accession>
<protein>
    <recommendedName>
        <fullName evidence="1">3-hydroxydecanoyl-[acyl-carrier-protein] dehydratase</fullName>
        <ecNumber evidence="1">4.2.1.59</ecNumber>
    </recommendedName>
    <alternativeName>
        <fullName evidence="1">3-hydroxyacyl-[acyl-carrier-protein] dehydratase FabA</fullName>
    </alternativeName>
    <alternativeName>
        <fullName evidence="1">Beta-hydroxydecanoyl thioester dehydrase</fullName>
    </alternativeName>
    <alternativeName>
        <fullName evidence="1">Trans-2-decenoyl-[acyl-carrier-protein] isomerase</fullName>
        <ecNumber evidence="1">5.3.3.14</ecNumber>
    </alternativeName>
</protein>
<feature type="chain" id="PRO_0000267746" description="3-hydroxydecanoyl-[acyl-carrier-protein] dehydratase">
    <location>
        <begin position="1"/>
        <end position="175"/>
    </location>
</feature>
<feature type="active site" evidence="1">
    <location>
        <position position="71"/>
    </location>
</feature>
<organism>
    <name type="scientific">Rhodopseudomonas palustris (strain BisB5)</name>
    <dbReference type="NCBI Taxonomy" id="316057"/>
    <lineage>
        <taxon>Bacteria</taxon>
        <taxon>Pseudomonadati</taxon>
        <taxon>Pseudomonadota</taxon>
        <taxon>Alphaproteobacteria</taxon>
        <taxon>Hyphomicrobiales</taxon>
        <taxon>Nitrobacteraceae</taxon>
        <taxon>Rhodopseudomonas</taxon>
    </lineage>
</organism>
<dbReference type="EC" id="4.2.1.59" evidence="1"/>
<dbReference type="EC" id="5.3.3.14" evidence="1"/>
<dbReference type="EMBL" id="CP000283">
    <property type="protein sequence ID" value="ABE37460.1"/>
    <property type="status" value="ALT_INIT"/>
    <property type="molecule type" value="Genomic_DNA"/>
</dbReference>
<dbReference type="SMR" id="Q13EM9"/>
<dbReference type="STRING" id="316057.RPD_0220"/>
<dbReference type="KEGG" id="rpd:RPD_0220"/>
<dbReference type="eggNOG" id="COG0764">
    <property type="taxonomic scope" value="Bacteria"/>
</dbReference>
<dbReference type="HOGENOM" id="CLU_097925_0_0_5"/>
<dbReference type="BioCyc" id="RPAL316057:RPD_RS01115-MONOMER"/>
<dbReference type="UniPathway" id="UPA00094"/>
<dbReference type="Proteomes" id="UP000001818">
    <property type="component" value="Chromosome"/>
</dbReference>
<dbReference type="GO" id="GO:0005737">
    <property type="term" value="C:cytoplasm"/>
    <property type="evidence" value="ECO:0007669"/>
    <property type="project" value="UniProtKB-SubCell"/>
</dbReference>
<dbReference type="GO" id="GO:0019171">
    <property type="term" value="F:(3R)-hydroxyacyl-[acyl-carrier-protein] dehydratase activity"/>
    <property type="evidence" value="ECO:0007669"/>
    <property type="project" value="UniProtKB-UniRule"/>
</dbReference>
<dbReference type="GO" id="GO:0034017">
    <property type="term" value="F:trans-2-decenoyl-acyl-carrier-protein isomerase activity"/>
    <property type="evidence" value="ECO:0007669"/>
    <property type="project" value="UniProtKB-UniRule"/>
</dbReference>
<dbReference type="GO" id="GO:0006636">
    <property type="term" value="P:unsaturated fatty acid biosynthetic process"/>
    <property type="evidence" value="ECO:0007669"/>
    <property type="project" value="UniProtKB-UniRule"/>
</dbReference>
<dbReference type="CDD" id="cd01287">
    <property type="entry name" value="FabA"/>
    <property type="match status" value="1"/>
</dbReference>
<dbReference type="Gene3D" id="3.10.129.10">
    <property type="entry name" value="Hotdog Thioesterase"/>
    <property type="match status" value="1"/>
</dbReference>
<dbReference type="HAMAP" id="MF_00405">
    <property type="entry name" value="FabA"/>
    <property type="match status" value="1"/>
</dbReference>
<dbReference type="InterPro" id="IPR010083">
    <property type="entry name" value="FabA"/>
</dbReference>
<dbReference type="InterPro" id="IPR013114">
    <property type="entry name" value="FabA_FabZ"/>
</dbReference>
<dbReference type="InterPro" id="IPR029069">
    <property type="entry name" value="HotDog_dom_sf"/>
</dbReference>
<dbReference type="NCBIfam" id="TIGR01749">
    <property type="entry name" value="fabA"/>
    <property type="match status" value="1"/>
</dbReference>
<dbReference type="NCBIfam" id="NF003509">
    <property type="entry name" value="PRK05174.1"/>
    <property type="match status" value="1"/>
</dbReference>
<dbReference type="PANTHER" id="PTHR30272">
    <property type="entry name" value="3-HYDROXYACYL-[ACYL-CARRIER-PROTEIN] DEHYDRATASE"/>
    <property type="match status" value="1"/>
</dbReference>
<dbReference type="PANTHER" id="PTHR30272:SF8">
    <property type="entry name" value="3-HYDROXYDECANOYL-[ACYL-CARRIER-PROTEIN] DEHYDRATASE"/>
    <property type="match status" value="1"/>
</dbReference>
<dbReference type="Pfam" id="PF07977">
    <property type="entry name" value="FabA"/>
    <property type="match status" value="1"/>
</dbReference>
<dbReference type="SUPFAM" id="SSF54637">
    <property type="entry name" value="Thioesterase/thiol ester dehydrase-isomerase"/>
    <property type="match status" value="1"/>
</dbReference>
<gene>
    <name evidence="1" type="primary">fabA</name>
    <name type="ordered locus">RPD_0220</name>
</gene>
<name>FABA_RHOPS</name>
<proteinExistence type="inferred from homology"/>
<keyword id="KW-0963">Cytoplasm</keyword>
<keyword id="KW-0275">Fatty acid biosynthesis</keyword>
<keyword id="KW-0276">Fatty acid metabolism</keyword>
<keyword id="KW-0413">Isomerase</keyword>
<keyword id="KW-0444">Lipid biosynthesis</keyword>
<keyword id="KW-0443">Lipid metabolism</keyword>
<keyword id="KW-0456">Lyase</keyword>
<comment type="function">
    <text evidence="1">Necessary for the introduction of cis unsaturation into fatty acids. Catalyzes the dehydration of (3R)-3-hydroxydecanoyl-ACP to E-(2)-decenoyl-ACP and then its isomerization to Z-(3)-decenoyl-ACP. Can catalyze the dehydratase reaction for beta-hydroxyacyl-ACPs with saturated chain lengths up to 16:0, being most active on intermediate chain length.</text>
</comment>
<comment type="catalytic activity">
    <reaction evidence="1">
        <text>a (3R)-hydroxyacyl-[ACP] = a (2E)-enoyl-[ACP] + H2O</text>
        <dbReference type="Rhea" id="RHEA:13097"/>
        <dbReference type="Rhea" id="RHEA-COMP:9925"/>
        <dbReference type="Rhea" id="RHEA-COMP:9945"/>
        <dbReference type="ChEBI" id="CHEBI:15377"/>
        <dbReference type="ChEBI" id="CHEBI:78784"/>
        <dbReference type="ChEBI" id="CHEBI:78827"/>
        <dbReference type="EC" id="4.2.1.59"/>
    </reaction>
</comment>
<comment type="catalytic activity">
    <reaction evidence="1">
        <text>(3R)-hydroxydecanoyl-[ACP] = (2E)-decenoyl-[ACP] + H2O</text>
        <dbReference type="Rhea" id="RHEA:41860"/>
        <dbReference type="Rhea" id="RHEA-COMP:9638"/>
        <dbReference type="Rhea" id="RHEA-COMP:9639"/>
        <dbReference type="ChEBI" id="CHEBI:15377"/>
        <dbReference type="ChEBI" id="CHEBI:78466"/>
        <dbReference type="ChEBI" id="CHEBI:78467"/>
    </reaction>
</comment>
<comment type="catalytic activity">
    <reaction evidence="1">
        <text>(2E)-decenoyl-[ACP] = (3Z)-decenoyl-[ACP]</text>
        <dbReference type="Rhea" id="RHEA:23568"/>
        <dbReference type="Rhea" id="RHEA-COMP:9639"/>
        <dbReference type="Rhea" id="RHEA-COMP:9927"/>
        <dbReference type="ChEBI" id="CHEBI:78467"/>
        <dbReference type="ChEBI" id="CHEBI:78798"/>
        <dbReference type="EC" id="5.3.3.14"/>
    </reaction>
</comment>
<comment type="pathway">
    <text evidence="1">Lipid metabolism; fatty acid biosynthesis.</text>
</comment>
<comment type="subunit">
    <text evidence="1">Homodimer.</text>
</comment>
<comment type="subcellular location">
    <subcellularLocation>
        <location evidence="1">Cytoplasm</location>
    </subcellularLocation>
</comment>
<comment type="similarity">
    <text evidence="1">Belongs to the thioester dehydratase family. FabA subfamily.</text>
</comment>
<comment type="sequence caution" evidence="2">
    <conflict type="erroneous initiation">
        <sequence resource="EMBL-CDS" id="ABE37460"/>
    </conflict>
</comment>
<reference key="1">
    <citation type="submission" date="2006-03" db="EMBL/GenBank/DDBJ databases">
        <title>Complete sequence of Rhodopseudomonas palustris BisB5.</title>
        <authorList>
            <consortium name="US DOE Joint Genome Institute"/>
            <person name="Copeland A."/>
            <person name="Lucas S."/>
            <person name="Lapidus A."/>
            <person name="Barry K."/>
            <person name="Detter J.C."/>
            <person name="Glavina del Rio T."/>
            <person name="Hammon N."/>
            <person name="Israni S."/>
            <person name="Dalin E."/>
            <person name="Tice H."/>
            <person name="Pitluck S."/>
            <person name="Chain P."/>
            <person name="Malfatti S."/>
            <person name="Shin M."/>
            <person name="Vergez L."/>
            <person name="Schmutz J."/>
            <person name="Larimer F."/>
            <person name="Land M."/>
            <person name="Hauser L."/>
            <person name="Pelletier D.A."/>
            <person name="Kyrpides N."/>
            <person name="Lykidis A."/>
            <person name="Oda Y."/>
            <person name="Harwood C.S."/>
            <person name="Richardson P."/>
        </authorList>
    </citation>
    <scope>NUCLEOTIDE SEQUENCE [LARGE SCALE GENOMIC DNA]</scope>
    <source>
        <strain>BisB5</strain>
    </source>
</reference>
<sequence>MRDRRSSYEYEDLLACGRGELFGPGNAQLPLPPMLMFDRITEISETGGAHGKGLIRAELDVNPDLWFFACHFKGDPVMPGCLGLDALWQMLGFFLGWSGGEGPGRALGSGELKFTGQVLPHVRKVVYNVDIKRVMRSKLWLGIADGWLSADDEIIYRAQDLKVGLFKQTAAKPAA</sequence>
<evidence type="ECO:0000255" key="1">
    <source>
        <dbReference type="HAMAP-Rule" id="MF_00405"/>
    </source>
</evidence>
<evidence type="ECO:0000305" key="2"/>